<dbReference type="EMBL" id="AF238282">
    <property type="protein sequence ID" value="AAF44334.1"/>
    <property type="molecule type" value="Genomic_DNA"/>
</dbReference>
<dbReference type="SMR" id="Q9JRP9"/>
<dbReference type="STRING" id="714.ACT75_06945"/>
<dbReference type="eggNOG" id="COG0468">
    <property type="taxonomic scope" value="Bacteria"/>
</dbReference>
<dbReference type="GO" id="GO:0005829">
    <property type="term" value="C:cytosol"/>
    <property type="evidence" value="ECO:0007669"/>
    <property type="project" value="TreeGrafter"/>
</dbReference>
<dbReference type="GO" id="GO:0005524">
    <property type="term" value="F:ATP binding"/>
    <property type="evidence" value="ECO:0007669"/>
    <property type="project" value="UniProtKB-UniRule"/>
</dbReference>
<dbReference type="GO" id="GO:0016887">
    <property type="term" value="F:ATP hydrolysis activity"/>
    <property type="evidence" value="ECO:0007669"/>
    <property type="project" value="InterPro"/>
</dbReference>
<dbReference type="GO" id="GO:0140664">
    <property type="term" value="F:ATP-dependent DNA damage sensor activity"/>
    <property type="evidence" value="ECO:0007669"/>
    <property type="project" value="InterPro"/>
</dbReference>
<dbReference type="GO" id="GO:0003684">
    <property type="term" value="F:damaged DNA binding"/>
    <property type="evidence" value="ECO:0007669"/>
    <property type="project" value="UniProtKB-UniRule"/>
</dbReference>
<dbReference type="GO" id="GO:0003697">
    <property type="term" value="F:single-stranded DNA binding"/>
    <property type="evidence" value="ECO:0007669"/>
    <property type="project" value="UniProtKB-UniRule"/>
</dbReference>
<dbReference type="GO" id="GO:0006310">
    <property type="term" value="P:DNA recombination"/>
    <property type="evidence" value="ECO:0007669"/>
    <property type="project" value="UniProtKB-UniRule"/>
</dbReference>
<dbReference type="GO" id="GO:0006281">
    <property type="term" value="P:DNA repair"/>
    <property type="evidence" value="ECO:0007669"/>
    <property type="project" value="UniProtKB-UniRule"/>
</dbReference>
<dbReference type="GO" id="GO:0009432">
    <property type="term" value="P:SOS response"/>
    <property type="evidence" value="ECO:0007669"/>
    <property type="project" value="UniProtKB-UniRule"/>
</dbReference>
<dbReference type="CDD" id="cd00983">
    <property type="entry name" value="RecA"/>
    <property type="match status" value="1"/>
</dbReference>
<dbReference type="FunFam" id="3.40.50.300:FF:000087">
    <property type="entry name" value="Recombinase RecA"/>
    <property type="match status" value="1"/>
</dbReference>
<dbReference type="Gene3D" id="3.40.50.300">
    <property type="entry name" value="P-loop containing nucleotide triphosphate hydrolases"/>
    <property type="match status" value="1"/>
</dbReference>
<dbReference type="HAMAP" id="MF_00268">
    <property type="entry name" value="RecA"/>
    <property type="match status" value="1"/>
</dbReference>
<dbReference type="InterPro" id="IPR003593">
    <property type="entry name" value="AAA+_ATPase"/>
</dbReference>
<dbReference type="InterPro" id="IPR013765">
    <property type="entry name" value="DNA_recomb/repair_RecA"/>
</dbReference>
<dbReference type="InterPro" id="IPR020584">
    <property type="entry name" value="DNA_recomb/repair_RecA_CS"/>
</dbReference>
<dbReference type="InterPro" id="IPR027417">
    <property type="entry name" value="P-loop_NTPase"/>
</dbReference>
<dbReference type="InterPro" id="IPR049261">
    <property type="entry name" value="RecA-like_C"/>
</dbReference>
<dbReference type="InterPro" id="IPR049428">
    <property type="entry name" value="RecA-like_N"/>
</dbReference>
<dbReference type="InterPro" id="IPR020588">
    <property type="entry name" value="RecA_ATP-bd"/>
</dbReference>
<dbReference type="InterPro" id="IPR023400">
    <property type="entry name" value="RecA_C_sf"/>
</dbReference>
<dbReference type="InterPro" id="IPR020587">
    <property type="entry name" value="RecA_monomer-monomer_interface"/>
</dbReference>
<dbReference type="NCBIfam" id="TIGR02012">
    <property type="entry name" value="tigrfam_recA"/>
    <property type="match status" value="1"/>
</dbReference>
<dbReference type="PANTHER" id="PTHR45900:SF1">
    <property type="entry name" value="MITOCHONDRIAL DNA REPAIR PROTEIN RECA HOMOLOG-RELATED"/>
    <property type="match status" value="1"/>
</dbReference>
<dbReference type="PANTHER" id="PTHR45900">
    <property type="entry name" value="RECA"/>
    <property type="match status" value="1"/>
</dbReference>
<dbReference type="Pfam" id="PF00154">
    <property type="entry name" value="RecA"/>
    <property type="match status" value="1"/>
</dbReference>
<dbReference type="Pfam" id="PF21096">
    <property type="entry name" value="RecA_C"/>
    <property type="match status" value="1"/>
</dbReference>
<dbReference type="PRINTS" id="PR00142">
    <property type="entry name" value="RECA"/>
</dbReference>
<dbReference type="SMART" id="SM00382">
    <property type="entry name" value="AAA"/>
    <property type="match status" value="1"/>
</dbReference>
<dbReference type="SUPFAM" id="SSF52540">
    <property type="entry name" value="P-loop containing nucleoside triphosphate hydrolases"/>
    <property type="match status" value="1"/>
</dbReference>
<dbReference type="SUPFAM" id="SSF54752">
    <property type="entry name" value="RecA protein, C-terminal domain"/>
    <property type="match status" value="1"/>
</dbReference>
<dbReference type="PROSITE" id="PS00321">
    <property type="entry name" value="RECA_1"/>
    <property type="match status" value="1"/>
</dbReference>
<dbReference type="PROSITE" id="PS50162">
    <property type="entry name" value="RECA_2"/>
    <property type="match status" value="1"/>
</dbReference>
<dbReference type="PROSITE" id="PS50163">
    <property type="entry name" value="RECA_3"/>
    <property type="match status" value="1"/>
</dbReference>
<evidence type="ECO:0000255" key="1">
    <source>
        <dbReference type="HAMAP-Rule" id="MF_00268"/>
    </source>
</evidence>
<keyword id="KW-0067">ATP-binding</keyword>
<keyword id="KW-0963">Cytoplasm</keyword>
<keyword id="KW-0227">DNA damage</keyword>
<keyword id="KW-0233">DNA recombination</keyword>
<keyword id="KW-0234">DNA repair</keyword>
<keyword id="KW-0238">DNA-binding</keyword>
<keyword id="KW-0547">Nucleotide-binding</keyword>
<keyword id="KW-0742">SOS response</keyword>
<sequence>MATQEEKQKALDAALGQIEKQFGKGAIMKLGDSQKLDIEAISTGSFGLDLALGIGGLPMGRIVEIFGPESSGKTTLTLSVIAEAQKTGKTCAFIDAEHALDPIYASKLGVDVKEPLVSQPDNGEQALEICDALVRSGAVDVIIVDSVAALTPKAEIEGDMGDSHMGLQARLMSQALRKLTSQIKNANCLVIFINQIRMKIGVMFGNPETTTGGNALKFYASVRLDIRRVGSIKEGDEVIGNETRVKVVKNKVAPPFRQVDFQILYGEGISKESELIELGVKHKLISKAGAWYAYQNEKIGQGKTNAMKWLKDNPEQAKFIESTLRDELLAHPESAITAEVEDEAGNGEGDFE</sequence>
<gene>
    <name evidence="1" type="primary">recA</name>
</gene>
<feature type="chain" id="PRO_0000122634" description="Protein RecA">
    <location>
        <begin position="1"/>
        <end position="352"/>
    </location>
</feature>
<feature type="binding site" evidence="1">
    <location>
        <begin position="67"/>
        <end position="74"/>
    </location>
    <ligand>
        <name>ATP</name>
        <dbReference type="ChEBI" id="CHEBI:30616"/>
    </ligand>
</feature>
<comment type="function">
    <text evidence="1">Can catalyze the hydrolysis of ATP in the presence of single-stranded DNA, the ATP-dependent uptake of single-stranded DNA by duplex DNA, and the ATP-dependent hybridization of homologous single-stranded DNAs. It interacts with LexA causing its activation and leading to its autocatalytic cleavage.</text>
</comment>
<comment type="subcellular location">
    <subcellularLocation>
        <location evidence="1">Cytoplasm</location>
    </subcellularLocation>
</comment>
<comment type="similarity">
    <text evidence="1">Belongs to the RecA family.</text>
</comment>
<name>RECA_AGGAC</name>
<protein>
    <recommendedName>
        <fullName evidence="1">Protein RecA</fullName>
    </recommendedName>
    <alternativeName>
        <fullName evidence="1">Recombinase A</fullName>
    </alternativeName>
</protein>
<proteinExistence type="inferred from homology"/>
<organism>
    <name type="scientific">Aggregatibacter actinomycetemcomitans</name>
    <name type="common">Actinobacillus actinomycetemcomitans</name>
    <name type="synonym">Haemophilus actinomycetemcomitans</name>
    <dbReference type="NCBI Taxonomy" id="714"/>
    <lineage>
        <taxon>Bacteria</taxon>
        <taxon>Pseudomonadati</taxon>
        <taxon>Pseudomonadota</taxon>
        <taxon>Gammaproteobacteria</taxon>
        <taxon>Pasteurellales</taxon>
        <taxon>Pasteurellaceae</taxon>
        <taxon>Aggregatibacter</taxon>
    </lineage>
</organism>
<accession>Q9JRP9</accession>
<reference key="1">
    <citation type="submission" date="2000-02" db="EMBL/GenBank/DDBJ databases">
        <title>Actinobacillus actinomycetecomitans SUNY 465 recA.</title>
        <authorList>
            <person name="Mintz K.P."/>
            <person name="Fives-Taylor P.M."/>
        </authorList>
    </citation>
    <scope>NUCLEOTIDE SEQUENCE [GENOMIC DNA]</scope>
    <source>
        <strain>SUNY 465</strain>
    </source>
</reference>